<keyword id="KW-0274">FAD</keyword>
<keyword id="KW-0285">Flavoprotein</keyword>
<keyword id="KW-0521">NADP</keyword>
<keyword id="KW-0560">Oxidoreductase</keyword>
<keyword id="KW-1185">Reference proteome</keyword>
<sequence>MAEEKIYDITIIGGGPVGLWAAFYAGLRGMTVNIIESLSELGGQPAILYPEKKIYDIPAFPQTTGAELIENLLIQLKRFEDRVSIHLKEEVQTFKKTDGIFTIATSKGQHLSKAIVIACGNGAFAPRPLGVDNEEDFANNNLLYNVHSLDQFAGKKVVIAGGGDSAVDWANHLDGVAESVTLIHRRDAFRAHEHSVELLYQSSVNVMTPYVPLEIKGENGHAQSLTVQRVKSDEVVELPIDALIVSFGFSTNNKNLRNWNVDYKRSSITVNAQFETSQEGVYAIGGAAEYDGKIDLIAVGMGEAPIAINQAIQYIEPDGKNRPVHSTSLIEE</sequence>
<evidence type="ECO:0000255" key="1">
    <source>
        <dbReference type="HAMAP-Rule" id="MF_01685"/>
    </source>
</evidence>
<accession>Q5M3J6</accession>
<gene>
    <name type="ordered locus">stu1417</name>
</gene>
<organism>
    <name type="scientific">Streptococcus thermophilus (strain ATCC BAA-250 / LMG 18311)</name>
    <dbReference type="NCBI Taxonomy" id="264199"/>
    <lineage>
        <taxon>Bacteria</taxon>
        <taxon>Bacillati</taxon>
        <taxon>Bacillota</taxon>
        <taxon>Bacilli</taxon>
        <taxon>Lactobacillales</taxon>
        <taxon>Streptococcaceae</taxon>
        <taxon>Streptococcus</taxon>
    </lineage>
</organism>
<comment type="catalytic activity">
    <reaction evidence="1">
        <text>2 reduced [2Fe-2S]-[ferredoxin] + NADP(+) + H(+) = 2 oxidized [2Fe-2S]-[ferredoxin] + NADPH</text>
        <dbReference type="Rhea" id="RHEA:20125"/>
        <dbReference type="Rhea" id="RHEA-COMP:10000"/>
        <dbReference type="Rhea" id="RHEA-COMP:10001"/>
        <dbReference type="ChEBI" id="CHEBI:15378"/>
        <dbReference type="ChEBI" id="CHEBI:33737"/>
        <dbReference type="ChEBI" id="CHEBI:33738"/>
        <dbReference type="ChEBI" id="CHEBI:57783"/>
        <dbReference type="ChEBI" id="CHEBI:58349"/>
        <dbReference type="EC" id="1.18.1.2"/>
    </reaction>
</comment>
<comment type="cofactor">
    <cofactor evidence="1">
        <name>FAD</name>
        <dbReference type="ChEBI" id="CHEBI:57692"/>
    </cofactor>
    <text evidence="1">Binds 1 FAD per subunit.</text>
</comment>
<comment type="subunit">
    <text evidence="1">Homodimer.</text>
</comment>
<comment type="similarity">
    <text evidence="1">Belongs to the ferredoxin--NADP reductase type 2 family.</text>
</comment>
<name>FENR_STRT2</name>
<feature type="chain" id="PRO_0000364976" description="Ferredoxin--NADP reductase">
    <location>
        <begin position="1"/>
        <end position="332"/>
    </location>
</feature>
<feature type="binding site" evidence="1">
    <location>
        <position position="36"/>
    </location>
    <ligand>
        <name>FAD</name>
        <dbReference type="ChEBI" id="CHEBI:57692"/>
    </ligand>
</feature>
<feature type="binding site" evidence="1">
    <location>
        <position position="44"/>
    </location>
    <ligand>
        <name>FAD</name>
        <dbReference type="ChEBI" id="CHEBI:57692"/>
    </ligand>
</feature>
<feature type="binding site" evidence="1">
    <location>
        <position position="49"/>
    </location>
    <ligand>
        <name>FAD</name>
        <dbReference type="ChEBI" id="CHEBI:57692"/>
    </ligand>
</feature>
<feature type="binding site" evidence="1">
    <location>
        <position position="91"/>
    </location>
    <ligand>
        <name>FAD</name>
        <dbReference type="ChEBI" id="CHEBI:57692"/>
    </ligand>
</feature>
<feature type="binding site" evidence="1">
    <location>
        <position position="124"/>
    </location>
    <ligand>
        <name>FAD</name>
        <dbReference type="ChEBI" id="CHEBI:57692"/>
    </ligand>
</feature>
<feature type="binding site" evidence="1">
    <location>
        <position position="327"/>
    </location>
    <ligand>
        <name>FAD</name>
        <dbReference type="ChEBI" id="CHEBI:57692"/>
    </ligand>
</feature>
<proteinExistence type="inferred from homology"/>
<dbReference type="EC" id="1.18.1.2" evidence="1"/>
<dbReference type="EMBL" id="CP000023">
    <property type="protein sequence ID" value="AAV61030.1"/>
    <property type="molecule type" value="Genomic_DNA"/>
</dbReference>
<dbReference type="RefSeq" id="WP_011226284.1">
    <property type="nucleotide sequence ID" value="NC_006448.1"/>
</dbReference>
<dbReference type="SMR" id="Q5M3J6"/>
<dbReference type="STRING" id="264199.stu1417"/>
<dbReference type="KEGG" id="stl:stu1417"/>
<dbReference type="eggNOG" id="COG0492">
    <property type="taxonomic scope" value="Bacteria"/>
</dbReference>
<dbReference type="HOGENOM" id="CLU_031864_5_5_9"/>
<dbReference type="Proteomes" id="UP000001170">
    <property type="component" value="Chromosome"/>
</dbReference>
<dbReference type="GO" id="GO:0004324">
    <property type="term" value="F:ferredoxin-NADP+ reductase activity"/>
    <property type="evidence" value="ECO:0007669"/>
    <property type="project" value="UniProtKB-UniRule"/>
</dbReference>
<dbReference type="GO" id="GO:0050660">
    <property type="term" value="F:flavin adenine dinucleotide binding"/>
    <property type="evidence" value="ECO:0007669"/>
    <property type="project" value="UniProtKB-UniRule"/>
</dbReference>
<dbReference type="GO" id="GO:0050661">
    <property type="term" value="F:NADP binding"/>
    <property type="evidence" value="ECO:0007669"/>
    <property type="project" value="UniProtKB-UniRule"/>
</dbReference>
<dbReference type="Gene3D" id="3.50.50.60">
    <property type="entry name" value="FAD/NAD(P)-binding domain"/>
    <property type="match status" value="2"/>
</dbReference>
<dbReference type="HAMAP" id="MF_01685">
    <property type="entry name" value="FENR2"/>
    <property type="match status" value="1"/>
</dbReference>
<dbReference type="InterPro" id="IPR036188">
    <property type="entry name" value="FAD/NAD-bd_sf"/>
</dbReference>
<dbReference type="InterPro" id="IPR023753">
    <property type="entry name" value="FAD/NAD-binding_dom"/>
</dbReference>
<dbReference type="InterPro" id="IPR022890">
    <property type="entry name" value="Fd--NADP_Rdtase_type_2"/>
</dbReference>
<dbReference type="InterPro" id="IPR050097">
    <property type="entry name" value="Ferredoxin-NADP_redctase_2"/>
</dbReference>
<dbReference type="PANTHER" id="PTHR48105">
    <property type="entry name" value="THIOREDOXIN REDUCTASE 1-RELATED-RELATED"/>
    <property type="match status" value="1"/>
</dbReference>
<dbReference type="Pfam" id="PF07992">
    <property type="entry name" value="Pyr_redox_2"/>
    <property type="match status" value="1"/>
</dbReference>
<dbReference type="PRINTS" id="PR00368">
    <property type="entry name" value="FADPNR"/>
</dbReference>
<dbReference type="PRINTS" id="PR00469">
    <property type="entry name" value="PNDRDTASEII"/>
</dbReference>
<dbReference type="SUPFAM" id="SSF51905">
    <property type="entry name" value="FAD/NAD(P)-binding domain"/>
    <property type="match status" value="1"/>
</dbReference>
<reference key="1">
    <citation type="journal article" date="2004" name="Nat. Biotechnol.">
        <title>Complete sequence and comparative genome analysis of the dairy bacterium Streptococcus thermophilus.</title>
        <authorList>
            <person name="Bolotin A."/>
            <person name="Quinquis B."/>
            <person name="Renault P."/>
            <person name="Sorokin A."/>
            <person name="Ehrlich S.D."/>
            <person name="Kulakauskas S."/>
            <person name="Lapidus A."/>
            <person name="Goltsman E."/>
            <person name="Mazur M."/>
            <person name="Pusch G.D."/>
            <person name="Fonstein M."/>
            <person name="Overbeek R."/>
            <person name="Kyprides N."/>
            <person name="Purnelle B."/>
            <person name="Prozzi D."/>
            <person name="Ngui K."/>
            <person name="Masuy D."/>
            <person name="Hancy F."/>
            <person name="Burteau S."/>
            <person name="Boutry M."/>
            <person name="Delcour J."/>
            <person name="Goffeau A."/>
            <person name="Hols P."/>
        </authorList>
    </citation>
    <scope>NUCLEOTIDE SEQUENCE [LARGE SCALE GENOMIC DNA]</scope>
    <source>
        <strain>ATCC BAA-250 / LMG 18311</strain>
    </source>
</reference>
<protein>
    <recommendedName>
        <fullName evidence="1">Ferredoxin--NADP reductase</fullName>
        <shortName evidence="1">FNR</shortName>
        <shortName evidence="1">Fd-NADP(+) reductase</shortName>
        <ecNumber evidence="1">1.18.1.2</ecNumber>
    </recommendedName>
</protein>